<comment type="function">
    <text evidence="1">Binds the 23S rRNA.</text>
</comment>
<comment type="subunit">
    <text evidence="1">Part of the 50S ribosomal subunit.</text>
</comment>
<comment type="similarity">
    <text evidence="1">Belongs to the bacterial ribosomal protein bL31 family. Type A subfamily.</text>
</comment>
<organism>
    <name type="scientific">Acidiphilium cryptum (strain JF-5)</name>
    <dbReference type="NCBI Taxonomy" id="349163"/>
    <lineage>
        <taxon>Bacteria</taxon>
        <taxon>Pseudomonadati</taxon>
        <taxon>Pseudomonadota</taxon>
        <taxon>Alphaproteobacteria</taxon>
        <taxon>Acetobacterales</taxon>
        <taxon>Acidocellaceae</taxon>
        <taxon>Acidiphilium</taxon>
    </lineage>
</organism>
<name>RL31_ACICJ</name>
<reference key="1">
    <citation type="submission" date="2007-05" db="EMBL/GenBank/DDBJ databases">
        <title>Complete sequence of chromosome of Acidiphilium cryptum JF-5.</title>
        <authorList>
            <consortium name="US DOE Joint Genome Institute"/>
            <person name="Copeland A."/>
            <person name="Lucas S."/>
            <person name="Lapidus A."/>
            <person name="Barry K."/>
            <person name="Detter J.C."/>
            <person name="Glavina del Rio T."/>
            <person name="Hammon N."/>
            <person name="Israni S."/>
            <person name="Dalin E."/>
            <person name="Tice H."/>
            <person name="Pitluck S."/>
            <person name="Sims D."/>
            <person name="Brettin T."/>
            <person name="Bruce D."/>
            <person name="Han C."/>
            <person name="Schmutz J."/>
            <person name="Larimer F."/>
            <person name="Land M."/>
            <person name="Hauser L."/>
            <person name="Kyrpides N."/>
            <person name="Kim E."/>
            <person name="Magnuson T."/>
            <person name="Richardson P."/>
        </authorList>
    </citation>
    <scope>NUCLEOTIDE SEQUENCE [LARGE SCALE GENOMIC DNA]</scope>
    <source>
        <strain>JF-5</strain>
    </source>
</reference>
<dbReference type="EMBL" id="CP000697">
    <property type="protein sequence ID" value="ABQ31824.1"/>
    <property type="molecule type" value="Genomic_DNA"/>
</dbReference>
<dbReference type="RefSeq" id="WP_007422773.1">
    <property type="nucleotide sequence ID" value="NC_009484.1"/>
</dbReference>
<dbReference type="SMR" id="A5G1U2"/>
<dbReference type="STRING" id="349163.Acry_2633"/>
<dbReference type="KEGG" id="acr:Acry_2633"/>
<dbReference type="eggNOG" id="COG0254">
    <property type="taxonomic scope" value="Bacteria"/>
</dbReference>
<dbReference type="HOGENOM" id="CLU_114306_3_2_5"/>
<dbReference type="Proteomes" id="UP000000245">
    <property type="component" value="Chromosome"/>
</dbReference>
<dbReference type="GO" id="GO:1990904">
    <property type="term" value="C:ribonucleoprotein complex"/>
    <property type="evidence" value="ECO:0007669"/>
    <property type="project" value="UniProtKB-KW"/>
</dbReference>
<dbReference type="GO" id="GO:0005840">
    <property type="term" value="C:ribosome"/>
    <property type="evidence" value="ECO:0007669"/>
    <property type="project" value="UniProtKB-KW"/>
</dbReference>
<dbReference type="GO" id="GO:0019843">
    <property type="term" value="F:rRNA binding"/>
    <property type="evidence" value="ECO:0007669"/>
    <property type="project" value="UniProtKB-KW"/>
</dbReference>
<dbReference type="GO" id="GO:0003735">
    <property type="term" value="F:structural constituent of ribosome"/>
    <property type="evidence" value="ECO:0007669"/>
    <property type="project" value="InterPro"/>
</dbReference>
<dbReference type="GO" id="GO:0006412">
    <property type="term" value="P:translation"/>
    <property type="evidence" value="ECO:0007669"/>
    <property type="project" value="UniProtKB-UniRule"/>
</dbReference>
<dbReference type="Gene3D" id="4.10.830.30">
    <property type="entry name" value="Ribosomal protein L31"/>
    <property type="match status" value="1"/>
</dbReference>
<dbReference type="HAMAP" id="MF_00501">
    <property type="entry name" value="Ribosomal_bL31_1"/>
    <property type="match status" value="1"/>
</dbReference>
<dbReference type="InterPro" id="IPR034704">
    <property type="entry name" value="Ribosomal_bL28/bL31-like_sf"/>
</dbReference>
<dbReference type="InterPro" id="IPR002150">
    <property type="entry name" value="Ribosomal_bL31"/>
</dbReference>
<dbReference type="InterPro" id="IPR027491">
    <property type="entry name" value="Ribosomal_bL31_A"/>
</dbReference>
<dbReference type="InterPro" id="IPR042105">
    <property type="entry name" value="Ribosomal_bL31_sf"/>
</dbReference>
<dbReference type="NCBIfam" id="TIGR00105">
    <property type="entry name" value="L31"/>
    <property type="match status" value="1"/>
</dbReference>
<dbReference type="NCBIfam" id="NF001809">
    <property type="entry name" value="PRK00528.1"/>
    <property type="match status" value="1"/>
</dbReference>
<dbReference type="PANTHER" id="PTHR33280">
    <property type="entry name" value="50S RIBOSOMAL PROTEIN L31, CHLOROPLASTIC"/>
    <property type="match status" value="1"/>
</dbReference>
<dbReference type="PANTHER" id="PTHR33280:SF6">
    <property type="entry name" value="LARGE RIBOSOMAL SUBUNIT PROTEIN BL31A"/>
    <property type="match status" value="1"/>
</dbReference>
<dbReference type="Pfam" id="PF01197">
    <property type="entry name" value="Ribosomal_L31"/>
    <property type="match status" value="1"/>
</dbReference>
<dbReference type="PRINTS" id="PR01249">
    <property type="entry name" value="RIBOSOMALL31"/>
</dbReference>
<dbReference type="SUPFAM" id="SSF143800">
    <property type="entry name" value="L28p-like"/>
    <property type="match status" value="1"/>
</dbReference>
<dbReference type="PROSITE" id="PS01143">
    <property type="entry name" value="RIBOSOMAL_L31"/>
    <property type="match status" value="1"/>
</dbReference>
<accession>A5G1U2</accession>
<gene>
    <name evidence="1" type="primary">rpmE</name>
    <name type="ordered locus">Acry_2633</name>
</gene>
<proteinExistence type="inferred from homology"/>
<feature type="chain" id="PRO_1000126548" description="Large ribosomal subunit protein bL31">
    <location>
        <begin position="1"/>
        <end position="75"/>
    </location>
</feature>
<keyword id="KW-1185">Reference proteome</keyword>
<keyword id="KW-0687">Ribonucleoprotein</keyword>
<keyword id="KW-0689">Ribosomal protein</keyword>
<keyword id="KW-0694">RNA-binding</keyword>
<keyword id="KW-0699">rRNA-binding</keyword>
<evidence type="ECO:0000255" key="1">
    <source>
        <dbReference type="HAMAP-Rule" id="MF_00501"/>
    </source>
</evidence>
<evidence type="ECO:0000305" key="2"/>
<protein>
    <recommendedName>
        <fullName evidence="1">Large ribosomal subunit protein bL31</fullName>
    </recommendedName>
    <alternativeName>
        <fullName evidence="2">50S ribosomal protein L31</fullName>
    </alternativeName>
</protein>
<sequence length="75" mass="8446">MKADIHPDYHEINIIMTDGTEYKTRSCYGKPGDTLRLDIDPKSHPAWTGQQRVLDTGGQVAKFNKRFAGIGARKK</sequence>